<dbReference type="EMBL" id="AL123456">
    <property type="protein sequence ID" value="CCP43378.1"/>
    <property type="molecule type" value="Genomic_DNA"/>
</dbReference>
<dbReference type="PIR" id="H70612">
    <property type="entry name" value="H70612"/>
</dbReference>
<dbReference type="PDB" id="4RLJ">
    <property type="method" value="X-ray"/>
    <property type="resolution" value="1.75 A"/>
    <property type="chains" value="A=2-158"/>
</dbReference>
<dbReference type="PDB" id="4RLT">
    <property type="method" value="X-ray"/>
    <property type="resolution" value="2.05 A"/>
    <property type="chains" value="A=2-158"/>
</dbReference>
<dbReference type="PDB" id="4RLU">
    <property type="method" value="X-ray"/>
    <property type="resolution" value="2.20 A"/>
    <property type="chains" value="A=2-158"/>
</dbReference>
<dbReference type="PDB" id="4RLW">
    <property type="method" value="X-ray"/>
    <property type="resolution" value="2.20 A"/>
    <property type="chains" value="A=2-158"/>
</dbReference>
<dbReference type="PDB" id="7SVT">
    <property type="method" value="X-ray"/>
    <property type="resolution" value="2.40 A"/>
    <property type="chains" value="A/H/O/V=1-158"/>
</dbReference>
<dbReference type="PDBsum" id="4RLJ"/>
<dbReference type="PDBsum" id="4RLT"/>
<dbReference type="PDBsum" id="4RLU"/>
<dbReference type="PDBsum" id="4RLW"/>
<dbReference type="PDBsum" id="7SVT"/>
<dbReference type="SMR" id="P9WFK1"/>
<dbReference type="FunCoup" id="P9WFK1">
    <property type="interactions" value="1"/>
</dbReference>
<dbReference type="IntAct" id="P9WFK1">
    <property type="interactions" value="1"/>
</dbReference>
<dbReference type="STRING" id="83332.Rv0635"/>
<dbReference type="PaxDb" id="83332-Rv0635"/>
<dbReference type="DNASU" id="888032"/>
<dbReference type="KEGG" id="mtu:Rv0635"/>
<dbReference type="KEGG" id="mtv:RVBD_0635"/>
<dbReference type="TubercuList" id="Rv0635"/>
<dbReference type="eggNOG" id="COG2030">
    <property type="taxonomic scope" value="Bacteria"/>
</dbReference>
<dbReference type="InParanoid" id="P9WFK1"/>
<dbReference type="OrthoDB" id="5415111at2"/>
<dbReference type="PhylomeDB" id="P9WFK1"/>
<dbReference type="BioCyc" id="MetaCyc:G185E-4777-MONOMER"/>
<dbReference type="EvolutionaryTrace" id="P9WFK1"/>
<dbReference type="Proteomes" id="UP000001584">
    <property type="component" value="Chromosome"/>
</dbReference>
<dbReference type="GO" id="GO:0005886">
    <property type="term" value="C:plasma membrane"/>
    <property type="evidence" value="ECO:0007005"/>
    <property type="project" value="MTBBASE"/>
</dbReference>
<dbReference type="GO" id="GO:0019171">
    <property type="term" value="F:(3R)-hydroxyacyl-[acyl-carrier-protein] dehydratase activity"/>
    <property type="evidence" value="ECO:0000314"/>
    <property type="project" value="MTBBASE"/>
</dbReference>
<dbReference type="GO" id="GO:0006633">
    <property type="term" value="P:fatty acid biosynthetic process"/>
    <property type="evidence" value="ECO:0000318"/>
    <property type="project" value="GO_Central"/>
</dbReference>
<dbReference type="CDD" id="cd03441">
    <property type="entry name" value="R_hydratase_like"/>
    <property type="match status" value="1"/>
</dbReference>
<dbReference type="Gene3D" id="3.10.129.10">
    <property type="entry name" value="Hotdog Thioesterase"/>
    <property type="match status" value="1"/>
</dbReference>
<dbReference type="HAMAP" id="MF_00799">
    <property type="entry name" value="UPF0336"/>
    <property type="match status" value="1"/>
</dbReference>
<dbReference type="InterPro" id="IPR039569">
    <property type="entry name" value="FAS1-like_DH_region"/>
</dbReference>
<dbReference type="InterPro" id="IPR016709">
    <property type="entry name" value="HadA-like"/>
</dbReference>
<dbReference type="InterPro" id="IPR029069">
    <property type="entry name" value="HotDog_dom_sf"/>
</dbReference>
<dbReference type="InterPro" id="IPR050965">
    <property type="entry name" value="UPF0336/Enoyl-CoA_hydratase"/>
</dbReference>
<dbReference type="InterPro" id="IPR054849">
    <property type="entry name" value="UPF0336_fam"/>
</dbReference>
<dbReference type="NCBIfam" id="NF040624">
    <property type="entry name" value="HadA"/>
    <property type="match status" value="1"/>
</dbReference>
<dbReference type="NCBIfam" id="NF010245">
    <property type="entry name" value="PRK13692.1"/>
    <property type="match status" value="1"/>
</dbReference>
<dbReference type="PANTHER" id="PTHR43437:SF3">
    <property type="entry name" value="HYDROXYACYL-THIOESTER DEHYDRATASE TYPE 2, MITOCHONDRIAL"/>
    <property type="match status" value="1"/>
</dbReference>
<dbReference type="PANTHER" id="PTHR43437">
    <property type="entry name" value="HYDROXYACYL-THIOESTER DEHYDRATASE TYPE 2, MITOCHONDRIAL-RELATED"/>
    <property type="match status" value="1"/>
</dbReference>
<dbReference type="Pfam" id="PF13452">
    <property type="entry name" value="FAS1_DH_region"/>
    <property type="match status" value="1"/>
</dbReference>
<dbReference type="PIRSF" id="PIRSF018072">
    <property type="entry name" value="UCP018072"/>
    <property type="match status" value="1"/>
</dbReference>
<dbReference type="SUPFAM" id="SSF54637">
    <property type="entry name" value="Thioesterase/thiol ester dehydrase-isomerase"/>
    <property type="match status" value="1"/>
</dbReference>
<comment type="interaction">
    <interactant intactId="EBI-15655895">
        <id>P9WFK1</id>
    </interactant>
    <interactant intactId="EBI-15655915">
        <id>P96927</id>
        <label>MT0665</label>
    </interactant>
    <organismsDiffer>true</organismsDiffer>
    <experiments>5</experiments>
</comment>
<comment type="miscellaneous">
    <text>Was identified as a high-confidence drug target.</text>
</comment>
<comment type="similarity">
    <text evidence="1">Belongs to the UPF0336 family.</text>
</comment>
<name>Y635_MYCTU</name>
<accession>P9WFK1</accession>
<accession>L0T749</accession>
<accession>P96926</accession>
<accession>Q7D9I0</accession>
<organism>
    <name type="scientific">Mycobacterium tuberculosis (strain ATCC 25618 / H37Rv)</name>
    <dbReference type="NCBI Taxonomy" id="83332"/>
    <lineage>
        <taxon>Bacteria</taxon>
        <taxon>Bacillati</taxon>
        <taxon>Actinomycetota</taxon>
        <taxon>Actinomycetes</taxon>
        <taxon>Mycobacteriales</taxon>
        <taxon>Mycobacteriaceae</taxon>
        <taxon>Mycobacterium</taxon>
        <taxon>Mycobacterium tuberculosis complex</taxon>
    </lineage>
</organism>
<evidence type="ECO:0000255" key="1">
    <source>
        <dbReference type="HAMAP-Rule" id="MF_00799"/>
    </source>
</evidence>
<evidence type="ECO:0007829" key="2">
    <source>
        <dbReference type="PDB" id="4RLJ"/>
    </source>
</evidence>
<evidence type="ECO:0007829" key="3">
    <source>
        <dbReference type="PDB" id="4RLT"/>
    </source>
</evidence>
<feature type="chain" id="PRO_0000216143" description="UPF0336 protein Rv0635">
    <location>
        <begin position="1"/>
        <end position="158"/>
    </location>
</feature>
<feature type="helix" evidence="2">
    <location>
        <begin position="5"/>
        <end position="7"/>
    </location>
</feature>
<feature type="strand" evidence="2">
    <location>
        <begin position="11"/>
        <end position="13"/>
    </location>
</feature>
<feature type="helix" evidence="2">
    <location>
        <begin position="22"/>
        <end position="31"/>
    </location>
</feature>
<feature type="helix" evidence="2">
    <location>
        <begin position="37"/>
        <end position="39"/>
    </location>
</feature>
<feature type="helix" evidence="2">
    <location>
        <begin position="42"/>
        <end position="46"/>
    </location>
</feature>
<feature type="turn" evidence="2">
    <location>
        <begin position="47"/>
        <end position="49"/>
    </location>
</feature>
<feature type="turn" evidence="2">
    <location>
        <begin position="57"/>
        <end position="60"/>
    </location>
</feature>
<feature type="helix" evidence="2">
    <location>
        <begin position="61"/>
        <end position="74"/>
    </location>
</feature>
<feature type="strand" evidence="3">
    <location>
        <begin position="77"/>
        <end position="79"/>
    </location>
</feature>
<feature type="helix" evidence="2">
    <location>
        <begin position="81"/>
        <end position="83"/>
    </location>
</feature>
<feature type="strand" evidence="2">
    <location>
        <begin position="84"/>
        <end position="95"/>
    </location>
</feature>
<feature type="strand" evidence="2">
    <location>
        <begin position="102"/>
        <end position="115"/>
    </location>
</feature>
<feature type="strand" evidence="2">
    <location>
        <begin position="118"/>
        <end position="129"/>
    </location>
</feature>
<feature type="strand" evidence="2">
    <location>
        <begin position="134"/>
        <end position="145"/>
    </location>
</feature>
<feature type="strand" evidence="3">
    <location>
        <begin position="152"/>
        <end position="155"/>
    </location>
</feature>
<proteinExistence type="evidence at protein level"/>
<sequence length="158" mass="17481">MALSADIVGMHYRYPDHYEVEREKIREYAVAVQNDDAWYFEEDGAAELGYKGLLAPLTFICVFGYKAQAAFFKHANIATAEAQIVQVDQVLKFEKPIVAGDKLYCDVYVDSVREAHGTQIIVTKNIVTNEEGDLVQETYTTLAGRAGEDGEGFSDGAA</sequence>
<gene>
    <name type="ordered locus">Rv0635</name>
    <name type="ORF">MTCY20H10.16</name>
</gene>
<protein>
    <recommendedName>
        <fullName evidence="1">UPF0336 protein Rv0635</fullName>
    </recommendedName>
</protein>
<reference key="1">
    <citation type="journal article" date="1998" name="Nature">
        <title>Deciphering the biology of Mycobacterium tuberculosis from the complete genome sequence.</title>
        <authorList>
            <person name="Cole S.T."/>
            <person name="Brosch R."/>
            <person name="Parkhill J."/>
            <person name="Garnier T."/>
            <person name="Churcher C.M."/>
            <person name="Harris D.E."/>
            <person name="Gordon S.V."/>
            <person name="Eiglmeier K."/>
            <person name="Gas S."/>
            <person name="Barry C.E. III"/>
            <person name="Tekaia F."/>
            <person name="Badcock K."/>
            <person name="Basham D."/>
            <person name="Brown D."/>
            <person name="Chillingworth T."/>
            <person name="Connor R."/>
            <person name="Davies R.M."/>
            <person name="Devlin K."/>
            <person name="Feltwell T."/>
            <person name="Gentles S."/>
            <person name="Hamlin N."/>
            <person name="Holroyd S."/>
            <person name="Hornsby T."/>
            <person name="Jagels K."/>
            <person name="Krogh A."/>
            <person name="McLean J."/>
            <person name="Moule S."/>
            <person name="Murphy L.D."/>
            <person name="Oliver S."/>
            <person name="Osborne J."/>
            <person name="Quail M.A."/>
            <person name="Rajandream M.A."/>
            <person name="Rogers J."/>
            <person name="Rutter S."/>
            <person name="Seeger K."/>
            <person name="Skelton S."/>
            <person name="Squares S."/>
            <person name="Squares R."/>
            <person name="Sulston J.E."/>
            <person name="Taylor K."/>
            <person name="Whitehead S."/>
            <person name="Barrell B.G."/>
        </authorList>
    </citation>
    <scope>NUCLEOTIDE SEQUENCE [LARGE SCALE GENOMIC DNA]</scope>
    <source>
        <strain>ATCC 25618 / H37Rv</strain>
    </source>
</reference>
<reference key="2">
    <citation type="journal article" date="2008" name="BMC Syst. Biol.">
        <title>targetTB: a target identification pipeline for Mycobacterium tuberculosis through an interactome, reactome and genome-scale structural analysis.</title>
        <authorList>
            <person name="Raman K."/>
            <person name="Yeturu K."/>
            <person name="Chandra N."/>
        </authorList>
    </citation>
    <scope>IDENTIFICATION AS A DRUG TARGET [LARGE SCALE ANALYSIS]</scope>
</reference>
<reference key="3">
    <citation type="journal article" date="2011" name="Mol. Cell. Proteomics">
        <title>Proteogenomic analysis of Mycobacterium tuberculosis by high resolution mass spectrometry.</title>
        <authorList>
            <person name="Kelkar D.S."/>
            <person name="Kumar D."/>
            <person name="Kumar P."/>
            <person name="Balakrishnan L."/>
            <person name="Muthusamy B."/>
            <person name="Yadav A.K."/>
            <person name="Shrivastava P."/>
            <person name="Marimuthu A."/>
            <person name="Anand S."/>
            <person name="Sundaram H."/>
            <person name="Kingsbury R."/>
            <person name="Harsha H.C."/>
            <person name="Nair B."/>
            <person name="Prasad T.S."/>
            <person name="Chauhan D.S."/>
            <person name="Katoch K."/>
            <person name="Katoch V.M."/>
            <person name="Kumar P."/>
            <person name="Chaerkady R."/>
            <person name="Ramachandran S."/>
            <person name="Dash D."/>
            <person name="Pandey A."/>
        </authorList>
    </citation>
    <scope>IDENTIFICATION BY MASS SPECTROMETRY [LARGE SCALE ANALYSIS]</scope>
    <source>
        <strain>ATCC 25618 / H37Rv</strain>
    </source>
</reference>
<keyword id="KW-0002">3D-structure</keyword>
<keyword id="KW-1185">Reference proteome</keyword>